<name>MURB_SHESR</name>
<keyword id="KW-0131">Cell cycle</keyword>
<keyword id="KW-0132">Cell division</keyword>
<keyword id="KW-0133">Cell shape</keyword>
<keyword id="KW-0961">Cell wall biogenesis/degradation</keyword>
<keyword id="KW-0963">Cytoplasm</keyword>
<keyword id="KW-0274">FAD</keyword>
<keyword id="KW-0285">Flavoprotein</keyword>
<keyword id="KW-0521">NADP</keyword>
<keyword id="KW-0560">Oxidoreductase</keyword>
<keyword id="KW-0573">Peptidoglycan synthesis</keyword>
<evidence type="ECO:0000255" key="1">
    <source>
        <dbReference type="HAMAP-Rule" id="MF_00037"/>
    </source>
</evidence>
<evidence type="ECO:0000305" key="2"/>
<gene>
    <name evidence="1" type="primary">murB</name>
    <name type="ordered locus">Shewmr7_0176</name>
</gene>
<comment type="function">
    <text evidence="1">Cell wall formation.</text>
</comment>
<comment type="catalytic activity">
    <reaction evidence="1">
        <text>UDP-N-acetyl-alpha-D-muramate + NADP(+) = UDP-N-acetyl-3-O-(1-carboxyvinyl)-alpha-D-glucosamine + NADPH + H(+)</text>
        <dbReference type="Rhea" id="RHEA:12248"/>
        <dbReference type="ChEBI" id="CHEBI:15378"/>
        <dbReference type="ChEBI" id="CHEBI:57783"/>
        <dbReference type="ChEBI" id="CHEBI:58349"/>
        <dbReference type="ChEBI" id="CHEBI:68483"/>
        <dbReference type="ChEBI" id="CHEBI:70757"/>
        <dbReference type="EC" id="1.3.1.98"/>
    </reaction>
</comment>
<comment type="cofactor">
    <cofactor evidence="1">
        <name>FAD</name>
        <dbReference type="ChEBI" id="CHEBI:57692"/>
    </cofactor>
</comment>
<comment type="pathway">
    <text evidence="1">Cell wall biogenesis; peptidoglycan biosynthesis.</text>
</comment>
<comment type="subcellular location">
    <subcellularLocation>
        <location evidence="1">Cytoplasm</location>
    </subcellularLocation>
</comment>
<comment type="similarity">
    <text evidence="1">Belongs to the MurB family.</text>
</comment>
<comment type="sequence caution" evidence="2">
    <conflict type="erroneous initiation">
        <sequence resource="EMBL-CDS" id="ABI41182"/>
    </conflict>
</comment>
<accession>Q0I0C3</accession>
<organism>
    <name type="scientific">Shewanella sp. (strain MR-7)</name>
    <dbReference type="NCBI Taxonomy" id="60481"/>
    <lineage>
        <taxon>Bacteria</taxon>
        <taxon>Pseudomonadati</taxon>
        <taxon>Pseudomonadota</taxon>
        <taxon>Gammaproteobacteria</taxon>
        <taxon>Alteromonadales</taxon>
        <taxon>Shewanellaceae</taxon>
        <taxon>Shewanella</taxon>
    </lineage>
</organism>
<dbReference type="EC" id="1.3.1.98" evidence="1"/>
<dbReference type="EMBL" id="CP000444">
    <property type="protein sequence ID" value="ABI41182.1"/>
    <property type="status" value="ALT_INIT"/>
    <property type="molecule type" value="Genomic_DNA"/>
</dbReference>
<dbReference type="SMR" id="Q0I0C3"/>
<dbReference type="KEGG" id="shm:Shewmr7_0176"/>
<dbReference type="HOGENOM" id="CLU_035304_0_0_6"/>
<dbReference type="UniPathway" id="UPA00219"/>
<dbReference type="GO" id="GO:0005829">
    <property type="term" value="C:cytosol"/>
    <property type="evidence" value="ECO:0007669"/>
    <property type="project" value="TreeGrafter"/>
</dbReference>
<dbReference type="GO" id="GO:0071949">
    <property type="term" value="F:FAD binding"/>
    <property type="evidence" value="ECO:0007669"/>
    <property type="project" value="InterPro"/>
</dbReference>
<dbReference type="GO" id="GO:0008762">
    <property type="term" value="F:UDP-N-acetylmuramate dehydrogenase activity"/>
    <property type="evidence" value="ECO:0007669"/>
    <property type="project" value="UniProtKB-UniRule"/>
</dbReference>
<dbReference type="GO" id="GO:0051301">
    <property type="term" value="P:cell division"/>
    <property type="evidence" value="ECO:0007669"/>
    <property type="project" value="UniProtKB-KW"/>
</dbReference>
<dbReference type="GO" id="GO:0071555">
    <property type="term" value="P:cell wall organization"/>
    <property type="evidence" value="ECO:0007669"/>
    <property type="project" value="UniProtKB-KW"/>
</dbReference>
<dbReference type="GO" id="GO:0009252">
    <property type="term" value="P:peptidoglycan biosynthetic process"/>
    <property type="evidence" value="ECO:0007669"/>
    <property type="project" value="UniProtKB-UniRule"/>
</dbReference>
<dbReference type="GO" id="GO:0008360">
    <property type="term" value="P:regulation of cell shape"/>
    <property type="evidence" value="ECO:0007669"/>
    <property type="project" value="UniProtKB-KW"/>
</dbReference>
<dbReference type="Gene3D" id="3.30.465.10">
    <property type="match status" value="1"/>
</dbReference>
<dbReference type="Gene3D" id="3.90.78.10">
    <property type="entry name" value="UDP-N-acetylenolpyruvoylglucosamine reductase, C-terminal domain"/>
    <property type="match status" value="1"/>
</dbReference>
<dbReference type="Gene3D" id="3.30.43.10">
    <property type="entry name" value="Uridine Diphospho-n-acetylenolpyruvylglucosamine Reductase, domain 2"/>
    <property type="match status" value="1"/>
</dbReference>
<dbReference type="HAMAP" id="MF_00037">
    <property type="entry name" value="MurB"/>
    <property type="match status" value="1"/>
</dbReference>
<dbReference type="InterPro" id="IPR016166">
    <property type="entry name" value="FAD-bd_PCMH"/>
</dbReference>
<dbReference type="InterPro" id="IPR036318">
    <property type="entry name" value="FAD-bd_PCMH-like_sf"/>
</dbReference>
<dbReference type="InterPro" id="IPR016167">
    <property type="entry name" value="FAD-bd_PCMH_sub1"/>
</dbReference>
<dbReference type="InterPro" id="IPR016169">
    <property type="entry name" value="FAD-bd_PCMH_sub2"/>
</dbReference>
<dbReference type="InterPro" id="IPR003170">
    <property type="entry name" value="MurB"/>
</dbReference>
<dbReference type="InterPro" id="IPR011601">
    <property type="entry name" value="MurB_C"/>
</dbReference>
<dbReference type="InterPro" id="IPR036635">
    <property type="entry name" value="MurB_C_sf"/>
</dbReference>
<dbReference type="InterPro" id="IPR006094">
    <property type="entry name" value="Oxid_FAD_bind_N"/>
</dbReference>
<dbReference type="NCBIfam" id="TIGR00179">
    <property type="entry name" value="murB"/>
    <property type="match status" value="1"/>
</dbReference>
<dbReference type="NCBIfam" id="NF000755">
    <property type="entry name" value="PRK00046.1"/>
    <property type="match status" value="1"/>
</dbReference>
<dbReference type="NCBIfam" id="NF010478">
    <property type="entry name" value="PRK13903.1"/>
    <property type="match status" value="1"/>
</dbReference>
<dbReference type="PANTHER" id="PTHR21071">
    <property type="entry name" value="UDP-N-ACETYLENOLPYRUVOYLGLUCOSAMINE REDUCTASE"/>
    <property type="match status" value="1"/>
</dbReference>
<dbReference type="PANTHER" id="PTHR21071:SF4">
    <property type="entry name" value="UDP-N-ACETYLENOLPYRUVOYLGLUCOSAMINE REDUCTASE"/>
    <property type="match status" value="1"/>
</dbReference>
<dbReference type="Pfam" id="PF01565">
    <property type="entry name" value="FAD_binding_4"/>
    <property type="match status" value="1"/>
</dbReference>
<dbReference type="Pfam" id="PF02873">
    <property type="entry name" value="MurB_C"/>
    <property type="match status" value="1"/>
</dbReference>
<dbReference type="SUPFAM" id="SSF56176">
    <property type="entry name" value="FAD-binding/transporter-associated domain-like"/>
    <property type="match status" value="1"/>
</dbReference>
<dbReference type="SUPFAM" id="SSF56194">
    <property type="entry name" value="Uridine diphospho-N-Acetylenolpyruvylglucosamine reductase, MurB, C-terminal domain"/>
    <property type="match status" value="1"/>
</dbReference>
<dbReference type="PROSITE" id="PS51387">
    <property type="entry name" value="FAD_PCMH"/>
    <property type="match status" value="1"/>
</dbReference>
<sequence>MSFPYSLKPFNTFGVEQSCLSMIEVHSKAELQSTCLSLYQSKRPMLVLGGGSNIVFTDDFNGTVVRVLTKGISCSEDGTHFYLAVEAGENWHELVQFSLNQNMPGLENLALIPGTVGAAPIQNIGAYGVELCDICDWVEYLDLESGNLLRLTTDECEFAYRESIFKGSLRDKAVITAVGLRLPKAWHPKLAYGPLQSFNAETVTSREIFDRVCEVRSEKLPNPEELGNAGSFFKNPIVSAATYMQLAAHFPSIVGYAQPNGEVKLAAGWLIEHAGLKGFALGNAGVHAKQALVLVNLGHATGQDICRLALHVIARVNEVFGVKLEAEPRIMGLTGETSLDV</sequence>
<proteinExistence type="inferred from homology"/>
<reference key="1">
    <citation type="submission" date="2006-08" db="EMBL/GenBank/DDBJ databases">
        <title>Complete sequence of chromosome 1 of Shewanella sp. MR-7.</title>
        <authorList>
            <person name="Copeland A."/>
            <person name="Lucas S."/>
            <person name="Lapidus A."/>
            <person name="Barry K."/>
            <person name="Detter J.C."/>
            <person name="Glavina del Rio T."/>
            <person name="Hammon N."/>
            <person name="Israni S."/>
            <person name="Dalin E."/>
            <person name="Tice H."/>
            <person name="Pitluck S."/>
            <person name="Kiss H."/>
            <person name="Brettin T."/>
            <person name="Bruce D."/>
            <person name="Han C."/>
            <person name="Tapia R."/>
            <person name="Gilna P."/>
            <person name="Schmutz J."/>
            <person name="Larimer F."/>
            <person name="Land M."/>
            <person name="Hauser L."/>
            <person name="Kyrpides N."/>
            <person name="Mikhailova N."/>
            <person name="Nealson K."/>
            <person name="Konstantinidis K."/>
            <person name="Klappenbach J."/>
            <person name="Tiedje J."/>
            <person name="Richardson P."/>
        </authorList>
    </citation>
    <scope>NUCLEOTIDE SEQUENCE [LARGE SCALE GENOMIC DNA]</scope>
    <source>
        <strain>MR-7</strain>
    </source>
</reference>
<feature type="chain" id="PRO_0000332504" description="UDP-N-acetylenolpyruvoylglucosamine reductase">
    <location>
        <begin position="1"/>
        <end position="341"/>
    </location>
</feature>
<feature type="domain" description="FAD-binding PCMH-type" evidence="1">
    <location>
        <begin position="13"/>
        <end position="185"/>
    </location>
</feature>
<feature type="active site" evidence="1">
    <location>
        <position position="161"/>
    </location>
</feature>
<feature type="active site" description="Proton donor" evidence="1">
    <location>
        <position position="231"/>
    </location>
</feature>
<feature type="active site" evidence="1">
    <location>
        <position position="327"/>
    </location>
</feature>
<protein>
    <recommendedName>
        <fullName evidence="1">UDP-N-acetylenolpyruvoylglucosamine reductase</fullName>
        <ecNumber evidence="1">1.3.1.98</ecNumber>
    </recommendedName>
    <alternativeName>
        <fullName evidence="1">UDP-N-acetylmuramate dehydrogenase</fullName>
    </alternativeName>
</protein>